<gene>
    <name evidence="1" type="primary">rplY</name>
    <name type="ordered locus">ECDH10B_2343</name>
</gene>
<name>RL25_ECODH</name>
<reference key="1">
    <citation type="journal article" date="2008" name="J. Bacteriol.">
        <title>The complete genome sequence of Escherichia coli DH10B: insights into the biology of a laboratory workhorse.</title>
        <authorList>
            <person name="Durfee T."/>
            <person name="Nelson R."/>
            <person name="Baldwin S."/>
            <person name="Plunkett G. III"/>
            <person name="Burland V."/>
            <person name="Mau B."/>
            <person name="Petrosino J.F."/>
            <person name="Qin X."/>
            <person name="Muzny D.M."/>
            <person name="Ayele M."/>
            <person name="Gibbs R.A."/>
            <person name="Csorgo B."/>
            <person name="Posfai G."/>
            <person name="Weinstock G.M."/>
            <person name="Blattner F.R."/>
        </authorList>
    </citation>
    <scope>NUCLEOTIDE SEQUENCE [LARGE SCALE GENOMIC DNA]</scope>
    <source>
        <strain>K12 / DH10B</strain>
    </source>
</reference>
<feature type="chain" id="PRO_1000142580" description="Large ribosomal subunit protein bL25">
    <location>
        <begin position="1"/>
        <end position="94"/>
    </location>
</feature>
<proteinExistence type="inferred from homology"/>
<evidence type="ECO:0000255" key="1">
    <source>
        <dbReference type="HAMAP-Rule" id="MF_01336"/>
    </source>
</evidence>
<evidence type="ECO:0000305" key="2"/>
<dbReference type="EMBL" id="CP000948">
    <property type="protein sequence ID" value="ACB03349.1"/>
    <property type="molecule type" value="Genomic_DNA"/>
</dbReference>
<dbReference type="RefSeq" id="WP_000494183.1">
    <property type="nucleotide sequence ID" value="NC_010473.1"/>
</dbReference>
<dbReference type="BMRB" id="B1X883"/>
<dbReference type="SMR" id="B1X883"/>
<dbReference type="GeneID" id="93774996"/>
<dbReference type="KEGG" id="ecd:ECDH10B_2343"/>
<dbReference type="HOGENOM" id="CLU_137946_0_0_6"/>
<dbReference type="GO" id="GO:0022625">
    <property type="term" value="C:cytosolic large ribosomal subunit"/>
    <property type="evidence" value="ECO:0007669"/>
    <property type="project" value="TreeGrafter"/>
</dbReference>
<dbReference type="GO" id="GO:0008097">
    <property type="term" value="F:5S rRNA binding"/>
    <property type="evidence" value="ECO:0007669"/>
    <property type="project" value="InterPro"/>
</dbReference>
<dbReference type="GO" id="GO:0003735">
    <property type="term" value="F:structural constituent of ribosome"/>
    <property type="evidence" value="ECO:0007669"/>
    <property type="project" value="InterPro"/>
</dbReference>
<dbReference type="GO" id="GO:0006412">
    <property type="term" value="P:translation"/>
    <property type="evidence" value="ECO:0007669"/>
    <property type="project" value="UniProtKB-UniRule"/>
</dbReference>
<dbReference type="CDD" id="cd00495">
    <property type="entry name" value="Ribosomal_L25_TL5_CTC"/>
    <property type="match status" value="1"/>
</dbReference>
<dbReference type="FunFam" id="2.40.240.10:FF:000002">
    <property type="entry name" value="50S ribosomal protein L25"/>
    <property type="match status" value="1"/>
</dbReference>
<dbReference type="Gene3D" id="2.40.240.10">
    <property type="entry name" value="Ribosomal Protein L25, Chain P"/>
    <property type="match status" value="1"/>
</dbReference>
<dbReference type="HAMAP" id="MF_01336">
    <property type="entry name" value="Ribosomal_bL25"/>
    <property type="match status" value="1"/>
</dbReference>
<dbReference type="InterPro" id="IPR020056">
    <property type="entry name" value="Rbsml_bL25/Gln-tRNA_synth_N"/>
</dbReference>
<dbReference type="InterPro" id="IPR011035">
    <property type="entry name" value="Ribosomal_bL25/Gln-tRNA_synth"/>
</dbReference>
<dbReference type="InterPro" id="IPR020055">
    <property type="entry name" value="Ribosomal_bL25_short"/>
</dbReference>
<dbReference type="InterPro" id="IPR029751">
    <property type="entry name" value="Ribosomal_L25_dom"/>
</dbReference>
<dbReference type="InterPro" id="IPR020930">
    <property type="entry name" value="Ribosomal_uL5_bac-type"/>
</dbReference>
<dbReference type="NCBIfam" id="NF004612">
    <property type="entry name" value="PRK05943.1"/>
    <property type="match status" value="1"/>
</dbReference>
<dbReference type="PANTHER" id="PTHR33284">
    <property type="entry name" value="RIBOSOMAL PROTEIN L25/GLN-TRNA SYNTHETASE, ANTI-CODON-BINDING DOMAIN-CONTAINING PROTEIN"/>
    <property type="match status" value="1"/>
</dbReference>
<dbReference type="PANTHER" id="PTHR33284:SF1">
    <property type="entry name" value="RIBOSOMAL PROTEIN L25_GLN-TRNA SYNTHETASE, ANTI-CODON-BINDING DOMAIN-CONTAINING PROTEIN"/>
    <property type="match status" value="1"/>
</dbReference>
<dbReference type="Pfam" id="PF01386">
    <property type="entry name" value="Ribosomal_L25p"/>
    <property type="match status" value="1"/>
</dbReference>
<dbReference type="SUPFAM" id="SSF50715">
    <property type="entry name" value="Ribosomal protein L25-like"/>
    <property type="match status" value="1"/>
</dbReference>
<organism>
    <name type="scientific">Escherichia coli (strain K12 / DH10B)</name>
    <dbReference type="NCBI Taxonomy" id="316385"/>
    <lineage>
        <taxon>Bacteria</taxon>
        <taxon>Pseudomonadati</taxon>
        <taxon>Pseudomonadota</taxon>
        <taxon>Gammaproteobacteria</taxon>
        <taxon>Enterobacterales</taxon>
        <taxon>Enterobacteriaceae</taxon>
        <taxon>Escherichia</taxon>
    </lineage>
</organism>
<keyword id="KW-0687">Ribonucleoprotein</keyword>
<keyword id="KW-0689">Ribosomal protein</keyword>
<keyword id="KW-0694">RNA-binding</keyword>
<keyword id="KW-0699">rRNA-binding</keyword>
<comment type="function">
    <text evidence="1">This is one of the proteins that binds to the 5S RNA in the ribosome where it forms part of the central protuberance.</text>
</comment>
<comment type="subunit">
    <text evidence="1">Part of the 50S ribosomal subunit; part of the 5S rRNA/L5/L18/L25 subcomplex. Contacts the 5S rRNA. Binds to the 5S rRNA independently of L5 and L18.</text>
</comment>
<comment type="similarity">
    <text evidence="1">Belongs to the bacterial ribosomal protein bL25 family.</text>
</comment>
<accession>B1X883</accession>
<sequence>MFTINAEVRKEQGKGASRRLRAANKFPAIIYGGKEAPLAIELDHDKVMNMQAKAEFYSEVLTIVVDGKEIKVKAQDVQRHPYKPKLQHIDFVRA</sequence>
<protein>
    <recommendedName>
        <fullName evidence="1">Large ribosomal subunit protein bL25</fullName>
    </recommendedName>
    <alternativeName>
        <fullName evidence="2">50S ribosomal protein L25</fullName>
    </alternativeName>
</protein>